<feature type="chain" id="PRO_0000163610" description="1-deoxy-D-xylulose 5-phosphate reductoisomerase">
    <location>
        <begin position="1"/>
        <end position="383"/>
    </location>
</feature>
<feature type="binding site" evidence="1">
    <location>
        <position position="10"/>
    </location>
    <ligand>
        <name>NADPH</name>
        <dbReference type="ChEBI" id="CHEBI:57783"/>
    </ligand>
</feature>
<feature type="binding site" evidence="1">
    <location>
        <position position="11"/>
    </location>
    <ligand>
        <name>NADPH</name>
        <dbReference type="ChEBI" id="CHEBI:57783"/>
    </ligand>
</feature>
<feature type="binding site" evidence="1">
    <location>
        <position position="12"/>
    </location>
    <ligand>
        <name>NADPH</name>
        <dbReference type="ChEBI" id="CHEBI:57783"/>
    </ligand>
</feature>
<feature type="binding site" evidence="1">
    <location>
        <position position="13"/>
    </location>
    <ligand>
        <name>NADPH</name>
        <dbReference type="ChEBI" id="CHEBI:57783"/>
    </ligand>
</feature>
<feature type="binding site" evidence="1">
    <location>
        <position position="36"/>
    </location>
    <ligand>
        <name>NADPH</name>
        <dbReference type="ChEBI" id="CHEBI:57783"/>
    </ligand>
</feature>
<feature type="binding site" evidence="1">
    <location>
        <position position="37"/>
    </location>
    <ligand>
        <name>NADPH</name>
        <dbReference type="ChEBI" id="CHEBI:57783"/>
    </ligand>
</feature>
<feature type="binding site" evidence="1">
    <location>
        <position position="38"/>
    </location>
    <ligand>
        <name>NADPH</name>
        <dbReference type="ChEBI" id="CHEBI:57783"/>
    </ligand>
</feature>
<feature type="binding site" evidence="1">
    <location>
        <position position="122"/>
    </location>
    <ligand>
        <name>NADPH</name>
        <dbReference type="ChEBI" id="CHEBI:57783"/>
    </ligand>
</feature>
<feature type="binding site" evidence="1">
    <location>
        <position position="123"/>
    </location>
    <ligand>
        <name>1-deoxy-D-xylulose 5-phosphate</name>
        <dbReference type="ChEBI" id="CHEBI:57792"/>
    </ligand>
</feature>
<feature type="binding site" evidence="1">
    <location>
        <position position="124"/>
    </location>
    <ligand>
        <name>NADPH</name>
        <dbReference type="ChEBI" id="CHEBI:57783"/>
    </ligand>
</feature>
<feature type="binding site" evidence="1">
    <location>
        <position position="148"/>
    </location>
    <ligand>
        <name>Mn(2+)</name>
        <dbReference type="ChEBI" id="CHEBI:29035"/>
    </ligand>
</feature>
<feature type="binding site" evidence="1">
    <location>
        <position position="149"/>
    </location>
    <ligand>
        <name>1-deoxy-D-xylulose 5-phosphate</name>
        <dbReference type="ChEBI" id="CHEBI:57792"/>
    </ligand>
</feature>
<feature type="binding site" evidence="1">
    <location>
        <position position="150"/>
    </location>
    <ligand>
        <name>1-deoxy-D-xylulose 5-phosphate</name>
        <dbReference type="ChEBI" id="CHEBI:57792"/>
    </ligand>
</feature>
<feature type="binding site" evidence="1">
    <location>
        <position position="150"/>
    </location>
    <ligand>
        <name>Mn(2+)</name>
        <dbReference type="ChEBI" id="CHEBI:29035"/>
    </ligand>
</feature>
<feature type="binding site" evidence="1">
    <location>
        <position position="174"/>
    </location>
    <ligand>
        <name>1-deoxy-D-xylulose 5-phosphate</name>
        <dbReference type="ChEBI" id="CHEBI:57792"/>
    </ligand>
</feature>
<feature type="binding site" evidence="1">
    <location>
        <position position="197"/>
    </location>
    <ligand>
        <name>1-deoxy-D-xylulose 5-phosphate</name>
        <dbReference type="ChEBI" id="CHEBI:57792"/>
    </ligand>
</feature>
<feature type="binding site" evidence="1">
    <location>
        <position position="203"/>
    </location>
    <ligand>
        <name>NADPH</name>
        <dbReference type="ChEBI" id="CHEBI:57783"/>
    </ligand>
</feature>
<feature type="binding site" evidence="1">
    <location>
        <position position="210"/>
    </location>
    <ligand>
        <name>1-deoxy-D-xylulose 5-phosphate</name>
        <dbReference type="ChEBI" id="CHEBI:57792"/>
    </ligand>
</feature>
<feature type="binding site" evidence="1">
    <location>
        <position position="215"/>
    </location>
    <ligand>
        <name>1-deoxy-D-xylulose 5-phosphate</name>
        <dbReference type="ChEBI" id="CHEBI:57792"/>
    </ligand>
</feature>
<feature type="binding site" evidence="1">
    <location>
        <position position="216"/>
    </location>
    <ligand>
        <name>1-deoxy-D-xylulose 5-phosphate</name>
        <dbReference type="ChEBI" id="CHEBI:57792"/>
    </ligand>
</feature>
<feature type="binding site" evidence="1">
    <location>
        <position position="219"/>
    </location>
    <ligand>
        <name>1-deoxy-D-xylulose 5-phosphate</name>
        <dbReference type="ChEBI" id="CHEBI:57792"/>
    </ligand>
</feature>
<feature type="binding site" evidence="1">
    <location>
        <position position="219"/>
    </location>
    <ligand>
        <name>Mn(2+)</name>
        <dbReference type="ChEBI" id="CHEBI:29035"/>
    </ligand>
</feature>
<organism>
    <name type="scientific">Bacillus subtilis (strain 168)</name>
    <dbReference type="NCBI Taxonomy" id="224308"/>
    <lineage>
        <taxon>Bacteria</taxon>
        <taxon>Bacillati</taxon>
        <taxon>Bacillota</taxon>
        <taxon>Bacilli</taxon>
        <taxon>Bacillales</taxon>
        <taxon>Bacillaceae</taxon>
        <taxon>Bacillus</taxon>
    </lineage>
</organism>
<name>DXR_BACSU</name>
<proteinExistence type="inferred from homology"/>
<sequence>MKNICLLGATGSIGEQTLDVLRAHQDQFQLVSMSFGRNIDKAVPMIEVFQPKFVSVGDLDTYHKLKQMSFSFECQIGLGEEGLIEAAVMEEVDIVVNALLGSVGLIPTLKAIEQKKTIALANKETLVTAGHIVKEHAKKYDVPLLPVDSEHSAIFQALQGEQAKNIERLIITASGGSFRDKTREELESVTVEDALKHPNWSMGAKITIDSATMMNKGLEVIEAHWLFDIPYEQIDVVLHKESIIHSMVEFHDKSVIAQLGTPDMRVPIQYALTYPDRLPLPDAKRLELWEIGSLHFEKADFDRFRCLQFAFESGKIGGTMPTVLNAANEVAVAAFLAGKIPFLAIEDCIEKALTRHQLLKKPSLADIQEVDKDTRGYVNSILT</sequence>
<dbReference type="EC" id="1.1.1.267" evidence="1"/>
<dbReference type="EMBL" id="AL009126">
    <property type="protein sequence ID" value="CAB13528.2"/>
    <property type="molecule type" value="Genomic_DNA"/>
</dbReference>
<dbReference type="PIR" id="B69881">
    <property type="entry name" value="B69881"/>
</dbReference>
<dbReference type="RefSeq" id="NP_389537.2">
    <property type="nucleotide sequence ID" value="NC_000964.3"/>
</dbReference>
<dbReference type="RefSeq" id="WP_003245155.1">
    <property type="nucleotide sequence ID" value="NZ_OZ025638.1"/>
</dbReference>
<dbReference type="SMR" id="O31753"/>
<dbReference type="FunCoup" id="O31753">
    <property type="interactions" value="560"/>
</dbReference>
<dbReference type="STRING" id="224308.BSU16550"/>
<dbReference type="jPOST" id="O31753"/>
<dbReference type="PaxDb" id="224308-BSU16550"/>
<dbReference type="EnsemblBacteria" id="CAB13528">
    <property type="protein sequence ID" value="CAB13528"/>
    <property type="gene ID" value="BSU_16550"/>
</dbReference>
<dbReference type="GeneID" id="939636"/>
<dbReference type="KEGG" id="bsu:BSU16550"/>
<dbReference type="PATRIC" id="fig|224308.179.peg.1796"/>
<dbReference type="eggNOG" id="COG0743">
    <property type="taxonomic scope" value="Bacteria"/>
</dbReference>
<dbReference type="InParanoid" id="O31753"/>
<dbReference type="OrthoDB" id="9806546at2"/>
<dbReference type="PhylomeDB" id="O31753"/>
<dbReference type="BioCyc" id="BSUB:BSU16550-MONOMER"/>
<dbReference type="UniPathway" id="UPA00056">
    <property type="reaction ID" value="UER00092"/>
</dbReference>
<dbReference type="Proteomes" id="UP000001570">
    <property type="component" value="Chromosome"/>
</dbReference>
<dbReference type="GO" id="GO:0030604">
    <property type="term" value="F:1-deoxy-D-xylulose-5-phosphate reductoisomerase activity"/>
    <property type="evidence" value="ECO:0000318"/>
    <property type="project" value="GO_Central"/>
</dbReference>
<dbReference type="GO" id="GO:0030145">
    <property type="term" value="F:manganese ion binding"/>
    <property type="evidence" value="ECO:0000318"/>
    <property type="project" value="GO_Central"/>
</dbReference>
<dbReference type="GO" id="GO:0070402">
    <property type="term" value="F:NADPH binding"/>
    <property type="evidence" value="ECO:0000318"/>
    <property type="project" value="GO_Central"/>
</dbReference>
<dbReference type="GO" id="GO:0051484">
    <property type="term" value="P:isopentenyl diphosphate biosynthetic process, methylerythritol 4-phosphate pathway involved in terpenoid biosynthetic process"/>
    <property type="evidence" value="ECO:0000318"/>
    <property type="project" value="GO_Central"/>
</dbReference>
<dbReference type="FunFam" id="3.40.50.720:FF:000045">
    <property type="entry name" value="1-deoxy-D-xylulose 5-phosphate reductoisomerase"/>
    <property type="match status" value="1"/>
</dbReference>
<dbReference type="Gene3D" id="1.10.1740.10">
    <property type="match status" value="1"/>
</dbReference>
<dbReference type="Gene3D" id="3.40.50.720">
    <property type="entry name" value="NAD(P)-binding Rossmann-like Domain"/>
    <property type="match status" value="1"/>
</dbReference>
<dbReference type="HAMAP" id="MF_00183">
    <property type="entry name" value="DXP_reductoisom"/>
    <property type="match status" value="1"/>
</dbReference>
<dbReference type="InterPro" id="IPR003821">
    <property type="entry name" value="DXP_reductoisomerase"/>
</dbReference>
<dbReference type="InterPro" id="IPR013644">
    <property type="entry name" value="DXP_reductoisomerase_C"/>
</dbReference>
<dbReference type="InterPro" id="IPR013512">
    <property type="entry name" value="DXP_reductoisomerase_N"/>
</dbReference>
<dbReference type="InterPro" id="IPR026877">
    <property type="entry name" value="DXPR_C"/>
</dbReference>
<dbReference type="InterPro" id="IPR036169">
    <property type="entry name" value="DXPR_C_sf"/>
</dbReference>
<dbReference type="InterPro" id="IPR036291">
    <property type="entry name" value="NAD(P)-bd_dom_sf"/>
</dbReference>
<dbReference type="NCBIfam" id="TIGR00243">
    <property type="entry name" value="Dxr"/>
    <property type="match status" value="1"/>
</dbReference>
<dbReference type="NCBIfam" id="NF009114">
    <property type="entry name" value="PRK12464.1"/>
    <property type="match status" value="1"/>
</dbReference>
<dbReference type="PANTHER" id="PTHR30525">
    <property type="entry name" value="1-DEOXY-D-XYLULOSE 5-PHOSPHATE REDUCTOISOMERASE"/>
    <property type="match status" value="1"/>
</dbReference>
<dbReference type="PANTHER" id="PTHR30525:SF0">
    <property type="entry name" value="1-DEOXY-D-XYLULOSE 5-PHOSPHATE REDUCTOISOMERASE, CHLOROPLASTIC"/>
    <property type="match status" value="1"/>
</dbReference>
<dbReference type="Pfam" id="PF08436">
    <property type="entry name" value="DXP_redisom_C"/>
    <property type="match status" value="1"/>
</dbReference>
<dbReference type="Pfam" id="PF02670">
    <property type="entry name" value="DXP_reductoisom"/>
    <property type="match status" value="1"/>
</dbReference>
<dbReference type="Pfam" id="PF13288">
    <property type="entry name" value="DXPR_C"/>
    <property type="match status" value="1"/>
</dbReference>
<dbReference type="PIRSF" id="PIRSF006205">
    <property type="entry name" value="Dxp_reductismrs"/>
    <property type="match status" value="1"/>
</dbReference>
<dbReference type="SUPFAM" id="SSF69055">
    <property type="entry name" value="1-deoxy-D-xylulose-5-phosphate reductoisomerase, C-terminal domain"/>
    <property type="match status" value="1"/>
</dbReference>
<dbReference type="SUPFAM" id="SSF55347">
    <property type="entry name" value="Glyceraldehyde-3-phosphate dehydrogenase-like, C-terminal domain"/>
    <property type="match status" value="1"/>
</dbReference>
<dbReference type="SUPFAM" id="SSF51735">
    <property type="entry name" value="NAD(P)-binding Rossmann-fold domains"/>
    <property type="match status" value="1"/>
</dbReference>
<accession>O31753</accession>
<keyword id="KW-0414">Isoprene biosynthesis</keyword>
<keyword id="KW-0464">Manganese</keyword>
<keyword id="KW-0479">Metal-binding</keyword>
<keyword id="KW-0521">NADP</keyword>
<keyword id="KW-0560">Oxidoreductase</keyword>
<keyword id="KW-1185">Reference proteome</keyword>
<evidence type="ECO:0000255" key="1">
    <source>
        <dbReference type="HAMAP-Rule" id="MF_00183"/>
    </source>
</evidence>
<reference key="1">
    <citation type="journal article" date="1997" name="Nature">
        <title>The complete genome sequence of the Gram-positive bacterium Bacillus subtilis.</title>
        <authorList>
            <person name="Kunst F."/>
            <person name="Ogasawara N."/>
            <person name="Moszer I."/>
            <person name="Albertini A.M."/>
            <person name="Alloni G."/>
            <person name="Azevedo V."/>
            <person name="Bertero M.G."/>
            <person name="Bessieres P."/>
            <person name="Bolotin A."/>
            <person name="Borchert S."/>
            <person name="Borriss R."/>
            <person name="Boursier L."/>
            <person name="Brans A."/>
            <person name="Braun M."/>
            <person name="Brignell S.C."/>
            <person name="Bron S."/>
            <person name="Brouillet S."/>
            <person name="Bruschi C.V."/>
            <person name="Caldwell B."/>
            <person name="Capuano V."/>
            <person name="Carter N.M."/>
            <person name="Choi S.-K."/>
            <person name="Codani J.-J."/>
            <person name="Connerton I.F."/>
            <person name="Cummings N.J."/>
            <person name="Daniel R.A."/>
            <person name="Denizot F."/>
            <person name="Devine K.M."/>
            <person name="Duesterhoeft A."/>
            <person name="Ehrlich S.D."/>
            <person name="Emmerson P.T."/>
            <person name="Entian K.-D."/>
            <person name="Errington J."/>
            <person name="Fabret C."/>
            <person name="Ferrari E."/>
            <person name="Foulger D."/>
            <person name="Fritz C."/>
            <person name="Fujita M."/>
            <person name="Fujita Y."/>
            <person name="Fuma S."/>
            <person name="Galizzi A."/>
            <person name="Galleron N."/>
            <person name="Ghim S.-Y."/>
            <person name="Glaser P."/>
            <person name="Goffeau A."/>
            <person name="Golightly E.J."/>
            <person name="Grandi G."/>
            <person name="Guiseppi G."/>
            <person name="Guy B.J."/>
            <person name="Haga K."/>
            <person name="Haiech J."/>
            <person name="Harwood C.R."/>
            <person name="Henaut A."/>
            <person name="Hilbert H."/>
            <person name="Holsappel S."/>
            <person name="Hosono S."/>
            <person name="Hullo M.-F."/>
            <person name="Itaya M."/>
            <person name="Jones L.-M."/>
            <person name="Joris B."/>
            <person name="Karamata D."/>
            <person name="Kasahara Y."/>
            <person name="Klaerr-Blanchard M."/>
            <person name="Klein C."/>
            <person name="Kobayashi Y."/>
            <person name="Koetter P."/>
            <person name="Koningstein G."/>
            <person name="Krogh S."/>
            <person name="Kumano M."/>
            <person name="Kurita K."/>
            <person name="Lapidus A."/>
            <person name="Lardinois S."/>
            <person name="Lauber J."/>
            <person name="Lazarevic V."/>
            <person name="Lee S.-M."/>
            <person name="Levine A."/>
            <person name="Liu H."/>
            <person name="Masuda S."/>
            <person name="Mauel C."/>
            <person name="Medigue C."/>
            <person name="Medina N."/>
            <person name="Mellado R.P."/>
            <person name="Mizuno M."/>
            <person name="Moestl D."/>
            <person name="Nakai S."/>
            <person name="Noback M."/>
            <person name="Noone D."/>
            <person name="O'Reilly M."/>
            <person name="Ogawa K."/>
            <person name="Ogiwara A."/>
            <person name="Oudega B."/>
            <person name="Park S.-H."/>
            <person name="Parro V."/>
            <person name="Pohl T.M."/>
            <person name="Portetelle D."/>
            <person name="Porwollik S."/>
            <person name="Prescott A.M."/>
            <person name="Presecan E."/>
            <person name="Pujic P."/>
            <person name="Purnelle B."/>
            <person name="Rapoport G."/>
            <person name="Rey M."/>
            <person name="Reynolds S."/>
            <person name="Rieger M."/>
            <person name="Rivolta C."/>
            <person name="Rocha E."/>
            <person name="Roche B."/>
            <person name="Rose M."/>
            <person name="Sadaie Y."/>
            <person name="Sato T."/>
            <person name="Scanlan E."/>
            <person name="Schleich S."/>
            <person name="Schroeter R."/>
            <person name="Scoffone F."/>
            <person name="Sekiguchi J."/>
            <person name="Sekowska A."/>
            <person name="Seror S.J."/>
            <person name="Serror P."/>
            <person name="Shin B.-S."/>
            <person name="Soldo B."/>
            <person name="Sorokin A."/>
            <person name="Tacconi E."/>
            <person name="Takagi T."/>
            <person name="Takahashi H."/>
            <person name="Takemaru K."/>
            <person name="Takeuchi M."/>
            <person name="Tamakoshi A."/>
            <person name="Tanaka T."/>
            <person name="Terpstra P."/>
            <person name="Tognoni A."/>
            <person name="Tosato V."/>
            <person name="Uchiyama S."/>
            <person name="Vandenbol M."/>
            <person name="Vannier F."/>
            <person name="Vassarotti A."/>
            <person name="Viari A."/>
            <person name="Wambutt R."/>
            <person name="Wedler E."/>
            <person name="Wedler H."/>
            <person name="Weitzenegger T."/>
            <person name="Winters P."/>
            <person name="Wipat A."/>
            <person name="Yamamoto H."/>
            <person name="Yamane K."/>
            <person name="Yasumoto K."/>
            <person name="Yata K."/>
            <person name="Yoshida K."/>
            <person name="Yoshikawa H.-F."/>
            <person name="Zumstein E."/>
            <person name="Yoshikawa H."/>
            <person name="Danchin A."/>
        </authorList>
    </citation>
    <scope>NUCLEOTIDE SEQUENCE [LARGE SCALE GENOMIC DNA]</scope>
    <source>
        <strain>168</strain>
    </source>
</reference>
<reference key="2">
    <citation type="journal article" date="2009" name="Microbiology">
        <title>From a consortium sequence to a unified sequence: the Bacillus subtilis 168 reference genome a decade later.</title>
        <authorList>
            <person name="Barbe V."/>
            <person name="Cruveiller S."/>
            <person name="Kunst F."/>
            <person name="Lenoble P."/>
            <person name="Meurice G."/>
            <person name="Sekowska A."/>
            <person name="Vallenet D."/>
            <person name="Wang T."/>
            <person name="Moszer I."/>
            <person name="Medigue C."/>
            <person name="Danchin A."/>
        </authorList>
    </citation>
    <scope>SEQUENCE REVISION TO C-TERMINUS</scope>
</reference>
<protein>
    <recommendedName>
        <fullName evidence="1">1-deoxy-D-xylulose 5-phosphate reductoisomerase</fullName>
        <shortName evidence="1">DXP reductoisomerase</shortName>
        <ecNumber evidence="1">1.1.1.267</ecNumber>
    </recommendedName>
    <alternativeName>
        <fullName evidence="1">1-deoxyxylulose-5-phosphate reductoisomerase</fullName>
    </alternativeName>
    <alternativeName>
        <fullName evidence="1">2-C-methyl-D-erythritol 4-phosphate synthase</fullName>
    </alternativeName>
</protein>
<comment type="function">
    <text evidence="1">Catalyzes the NADPH-dependent rearrangement and reduction of 1-deoxy-D-xylulose-5-phosphate (DXP) to 2-C-methyl-D-erythritol 4-phosphate (MEP).</text>
</comment>
<comment type="catalytic activity">
    <reaction evidence="1">
        <text>2-C-methyl-D-erythritol 4-phosphate + NADP(+) = 1-deoxy-D-xylulose 5-phosphate + NADPH + H(+)</text>
        <dbReference type="Rhea" id="RHEA:13717"/>
        <dbReference type="ChEBI" id="CHEBI:15378"/>
        <dbReference type="ChEBI" id="CHEBI:57783"/>
        <dbReference type="ChEBI" id="CHEBI:57792"/>
        <dbReference type="ChEBI" id="CHEBI:58262"/>
        <dbReference type="ChEBI" id="CHEBI:58349"/>
        <dbReference type="EC" id="1.1.1.267"/>
    </reaction>
    <physiologicalReaction direction="right-to-left" evidence="1">
        <dbReference type="Rhea" id="RHEA:13719"/>
    </physiologicalReaction>
</comment>
<comment type="cofactor">
    <cofactor evidence="1">
        <name>Mg(2+)</name>
        <dbReference type="ChEBI" id="CHEBI:18420"/>
    </cofactor>
    <cofactor evidence="1">
        <name>Mn(2+)</name>
        <dbReference type="ChEBI" id="CHEBI:29035"/>
    </cofactor>
</comment>
<comment type="pathway">
    <text evidence="1">Isoprenoid biosynthesis; isopentenyl diphosphate biosynthesis via DXP pathway; isopentenyl diphosphate from 1-deoxy-D-xylulose 5-phosphate: step 1/6.</text>
</comment>
<comment type="similarity">
    <text evidence="1">Belongs to the DXR family.</text>
</comment>
<gene>
    <name evidence="1" type="primary">dxr</name>
    <name type="synonym">yluB</name>
    <name type="ordered locus">BSU16550</name>
</gene>